<feature type="chain" id="PRO_0000110480" description="Beta-ketoacyl-[acyl-carrier-protein] synthase III">
    <location>
        <begin position="1"/>
        <end position="323"/>
    </location>
</feature>
<feature type="region of interest" description="ACP-binding" evidence="1">
    <location>
        <begin position="249"/>
        <end position="253"/>
    </location>
</feature>
<feature type="active site" evidence="1">
    <location>
        <position position="112"/>
    </location>
</feature>
<feature type="active site" evidence="1">
    <location>
        <position position="248"/>
    </location>
</feature>
<feature type="active site" evidence="1">
    <location>
        <position position="278"/>
    </location>
</feature>
<reference key="1">
    <citation type="journal article" date="2002" name="Proc. Natl. Acad. Sci. U.S.A.">
        <title>Complete genome sequence and comparative genomic analysis of an emerging human pathogen, serotype V Streptococcus agalactiae.</title>
        <authorList>
            <person name="Tettelin H."/>
            <person name="Masignani V."/>
            <person name="Cieslewicz M.J."/>
            <person name="Eisen J.A."/>
            <person name="Peterson S.N."/>
            <person name="Wessels M.R."/>
            <person name="Paulsen I.T."/>
            <person name="Nelson K.E."/>
            <person name="Margarit I."/>
            <person name="Read T.D."/>
            <person name="Madoff L.C."/>
            <person name="Wolf A.M."/>
            <person name="Beanan M.J."/>
            <person name="Brinkac L.M."/>
            <person name="Daugherty S.C."/>
            <person name="DeBoy R.T."/>
            <person name="Durkin A.S."/>
            <person name="Kolonay J.F."/>
            <person name="Madupu R."/>
            <person name="Lewis M.R."/>
            <person name="Radune D."/>
            <person name="Fedorova N.B."/>
            <person name="Scanlan D."/>
            <person name="Khouri H.M."/>
            <person name="Mulligan S."/>
            <person name="Carty H.A."/>
            <person name="Cline R.T."/>
            <person name="Van Aken S.E."/>
            <person name="Gill J."/>
            <person name="Scarselli M."/>
            <person name="Mora M."/>
            <person name="Iacobini E.T."/>
            <person name="Brettoni C."/>
            <person name="Galli G."/>
            <person name="Mariani M."/>
            <person name="Vegni F."/>
            <person name="Maione D."/>
            <person name="Rinaudo D."/>
            <person name="Rappuoli R."/>
            <person name="Telford J.L."/>
            <person name="Kasper D.L."/>
            <person name="Grandi G."/>
            <person name="Fraser C.M."/>
        </authorList>
    </citation>
    <scope>NUCLEOTIDE SEQUENCE [LARGE SCALE GENOMIC DNA]</scope>
    <source>
        <strain>ATCC BAA-611 / 2603 V/R</strain>
    </source>
</reference>
<proteinExistence type="inferred from homology"/>
<gene>
    <name evidence="1" type="primary">fabH</name>
    <name type="ordered locus">SAG0344</name>
</gene>
<sequence length="323" mass="35181">MVFAKISQLAHYAPSQIIKNEDLSLIMDTSDDWISSRTGIKQRHISKNETTADLANKVAEQLIEKSGYSASQIDFIIVATMTPDSMMPSTAARVQAHIGASNAFAFDLSAACSGFVFALSTAEKLISSGSYQKGLVIGAETVSKVLDWTDRGTAVLFGDGAGGVLLEASKEKHFLAESLNTDGSRQGLQSSQVGLNSPFSDEVLDDKFLKMDGRAIFDFAIKEVSKSINHLIETSYLEKEDIDYLFLHQANRRILDKMSRKIDIARDKFPENMMDYGNTSAASIPILLSESYENGLLKLDGNQTILLSGFGGGLTWGSLIVKI</sequence>
<accession>P64113</accession>
<accession>Q8E1L0</accession>
<accession>Q8E727</accession>
<name>FABH_STRA5</name>
<comment type="function">
    <text evidence="1">Catalyzes the condensation reaction of fatty acid synthesis by the addition to an acyl acceptor of two carbons from malonyl-ACP. Catalyzes the first condensation reaction which initiates fatty acid synthesis and may therefore play a role in governing the total rate of fatty acid production. Possesses both acetoacetyl-ACP synthase and acetyl transacylase activities. Its substrate specificity determines the biosynthesis of branched-chain and/or straight-chain of fatty acids.</text>
</comment>
<comment type="catalytic activity">
    <reaction evidence="1">
        <text>malonyl-[ACP] + acetyl-CoA + H(+) = 3-oxobutanoyl-[ACP] + CO2 + CoA</text>
        <dbReference type="Rhea" id="RHEA:12080"/>
        <dbReference type="Rhea" id="RHEA-COMP:9623"/>
        <dbReference type="Rhea" id="RHEA-COMP:9625"/>
        <dbReference type="ChEBI" id="CHEBI:15378"/>
        <dbReference type="ChEBI" id="CHEBI:16526"/>
        <dbReference type="ChEBI" id="CHEBI:57287"/>
        <dbReference type="ChEBI" id="CHEBI:57288"/>
        <dbReference type="ChEBI" id="CHEBI:78449"/>
        <dbReference type="ChEBI" id="CHEBI:78450"/>
        <dbReference type="EC" id="2.3.1.180"/>
    </reaction>
</comment>
<comment type="pathway">
    <text evidence="1">Lipid metabolism; fatty acid biosynthesis.</text>
</comment>
<comment type="subunit">
    <text evidence="1">Homodimer.</text>
</comment>
<comment type="subcellular location">
    <subcellularLocation>
        <location evidence="1">Cytoplasm</location>
    </subcellularLocation>
</comment>
<comment type="domain">
    <text evidence="1">The last Arg residue of the ACP-binding site is essential for the weak association between ACP/AcpP and FabH.</text>
</comment>
<comment type="similarity">
    <text evidence="1">Belongs to the thiolase-like superfamily. FabH family.</text>
</comment>
<keyword id="KW-0012">Acyltransferase</keyword>
<keyword id="KW-0963">Cytoplasm</keyword>
<keyword id="KW-0275">Fatty acid biosynthesis</keyword>
<keyword id="KW-0276">Fatty acid metabolism</keyword>
<keyword id="KW-0444">Lipid biosynthesis</keyword>
<keyword id="KW-0443">Lipid metabolism</keyword>
<keyword id="KW-0511">Multifunctional enzyme</keyword>
<keyword id="KW-1185">Reference proteome</keyword>
<keyword id="KW-0808">Transferase</keyword>
<protein>
    <recommendedName>
        <fullName evidence="1">Beta-ketoacyl-[acyl-carrier-protein] synthase III</fullName>
        <shortName evidence="1">Beta-ketoacyl-ACP synthase III</shortName>
        <shortName evidence="1">KAS III</shortName>
        <ecNumber evidence="1">2.3.1.180</ecNumber>
    </recommendedName>
    <alternativeName>
        <fullName evidence="1">3-oxoacyl-[acyl-carrier-protein] synthase 3</fullName>
    </alternativeName>
    <alternativeName>
        <fullName evidence="1">3-oxoacyl-[acyl-carrier-protein] synthase III</fullName>
    </alternativeName>
</protein>
<organism>
    <name type="scientific">Streptococcus agalactiae serotype V (strain ATCC BAA-611 / 2603 V/R)</name>
    <dbReference type="NCBI Taxonomy" id="208435"/>
    <lineage>
        <taxon>Bacteria</taxon>
        <taxon>Bacillati</taxon>
        <taxon>Bacillota</taxon>
        <taxon>Bacilli</taxon>
        <taxon>Lactobacillales</taxon>
        <taxon>Streptococcaceae</taxon>
        <taxon>Streptococcus</taxon>
    </lineage>
</organism>
<dbReference type="EC" id="2.3.1.180" evidence="1"/>
<dbReference type="EMBL" id="AE009948">
    <property type="protein sequence ID" value="AAM99250.1"/>
    <property type="molecule type" value="Genomic_DNA"/>
</dbReference>
<dbReference type="RefSeq" id="NP_687378.1">
    <property type="nucleotide sequence ID" value="NC_004116.1"/>
</dbReference>
<dbReference type="RefSeq" id="WP_000230695.1">
    <property type="nucleotide sequence ID" value="NC_004116.1"/>
</dbReference>
<dbReference type="SMR" id="P64113"/>
<dbReference type="STRING" id="208435.SAG0344"/>
<dbReference type="KEGG" id="sag:SAG0344"/>
<dbReference type="PATRIC" id="fig|208435.3.peg.339"/>
<dbReference type="HOGENOM" id="CLU_039592_4_1_9"/>
<dbReference type="OrthoDB" id="9815506at2"/>
<dbReference type="UniPathway" id="UPA00094"/>
<dbReference type="Proteomes" id="UP000000821">
    <property type="component" value="Chromosome"/>
</dbReference>
<dbReference type="GO" id="GO:0005737">
    <property type="term" value="C:cytoplasm"/>
    <property type="evidence" value="ECO:0007669"/>
    <property type="project" value="UniProtKB-SubCell"/>
</dbReference>
<dbReference type="GO" id="GO:0004315">
    <property type="term" value="F:3-oxoacyl-[acyl-carrier-protein] synthase activity"/>
    <property type="evidence" value="ECO:0007669"/>
    <property type="project" value="InterPro"/>
</dbReference>
<dbReference type="GO" id="GO:0033818">
    <property type="term" value="F:beta-ketoacyl-acyl-carrier-protein synthase III activity"/>
    <property type="evidence" value="ECO:0007669"/>
    <property type="project" value="UniProtKB-UniRule"/>
</dbReference>
<dbReference type="GO" id="GO:0006633">
    <property type="term" value="P:fatty acid biosynthetic process"/>
    <property type="evidence" value="ECO:0007669"/>
    <property type="project" value="UniProtKB-UniRule"/>
</dbReference>
<dbReference type="CDD" id="cd00830">
    <property type="entry name" value="KAS_III"/>
    <property type="match status" value="1"/>
</dbReference>
<dbReference type="Gene3D" id="3.40.47.10">
    <property type="match status" value="1"/>
</dbReference>
<dbReference type="HAMAP" id="MF_01815">
    <property type="entry name" value="FabH"/>
    <property type="match status" value="1"/>
</dbReference>
<dbReference type="InterPro" id="IPR013747">
    <property type="entry name" value="ACP_syn_III_C"/>
</dbReference>
<dbReference type="InterPro" id="IPR013751">
    <property type="entry name" value="ACP_syn_III_N"/>
</dbReference>
<dbReference type="InterPro" id="IPR004655">
    <property type="entry name" value="FabH"/>
</dbReference>
<dbReference type="InterPro" id="IPR016039">
    <property type="entry name" value="Thiolase-like"/>
</dbReference>
<dbReference type="NCBIfam" id="TIGR00747">
    <property type="entry name" value="fabH"/>
    <property type="match status" value="1"/>
</dbReference>
<dbReference type="NCBIfam" id="NF006829">
    <property type="entry name" value="PRK09352.1"/>
    <property type="match status" value="1"/>
</dbReference>
<dbReference type="PANTHER" id="PTHR43091">
    <property type="entry name" value="3-OXOACYL-[ACYL-CARRIER-PROTEIN] SYNTHASE"/>
    <property type="match status" value="1"/>
</dbReference>
<dbReference type="PANTHER" id="PTHR43091:SF1">
    <property type="entry name" value="BETA-KETOACYL-[ACYL-CARRIER-PROTEIN] SYNTHASE III, CHLOROPLASTIC"/>
    <property type="match status" value="1"/>
</dbReference>
<dbReference type="Pfam" id="PF08545">
    <property type="entry name" value="ACP_syn_III"/>
    <property type="match status" value="1"/>
</dbReference>
<dbReference type="Pfam" id="PF08541">
    <property type="entry name" value="ACP_syn_III_C"/>
    <property type="match status" value="1"/>
</dbReference>
<dbReference type="SUPFAM" id="SSF53901">
    <property type="entry name" value="Thiolase-like"/>
    <property type="match status" value="1"/>
</dbReference>
<evidence type="ECO:0000255" key="1">
    <source>
        <dbReference type="HAMAP-Rule" id="MF_01815"/>
    </source>
</evidence>